<organism>
    <name type="scientific">Bacillus thuringiensis (strain Al Hakam)</name>
    <dbReference type="NCBI Taxonomy" id="412694"/>
    <lineage>
        <taxon>Bacteria</taxon>
        <taxon>Bacillati</taxon>
        <taxon>Bacillota</taxon>
        <taxon>Bacilli</taxon>
        <taxon>Bacillales</taxon>
        <taxon>Bacillaceae</taxon>
        <taxon>Bacillus</taxon>
        <taxon>Bacillus cereus group</taxon>
    </lineage>
</organism>
<evidence type="ECO:0000255" key="1">
    <source>
        <dbReference type="HAMAP-Rule" id="MF_00031"/>
    </source>
</evidence>
<dbReference type="EMBL" id="CP000485">
    <property type="protein sequence ID" value="ABK87220.1"/>
    <property type="molecule type" value="Genomic_DNA"/>
</dbReference>
<dbReference type="RefSeq" id="WP_000464508.1">
    <property type="nucleotide sequence ID" value="NC_008600.1"/>
</dbReference>
<dbReference type="SMR" id="A0RJ27"/>
<dbReference type="GeneID" id="93006680"/>
<dbReference type="KEGG" id="btl:BALH_4000"/>
<dbReference type="HOGENOM" id="CLU_087936_1_0_9"/>
<dbReference type="GO" id="GO:0005737">
    <property type="term" value="C:cytoplasm"/>
    <property type="evidence" value="ECO:0007669"/>
    <property type="project" value="UniProtKB-SubCell"/>
</dbReference>
<dbReference type="GO" id="GO:0009379">
    <property type="term" value="C:Holliday junction helicase complex"/>
    <property type="evidence" value="ECO:0007669"/>
    <property type="project" value="InterPro"/>
</dbReference>
<dbReference type="GO" id="GO:0048476">
    <property type="term" value="C:Holliday junction resolvase complex"/>
    <property type="evidence" value="ECO:0007669"/>
    <property type="project" value="UniProtKB-UniRule"/>
</dbReference>
<dbReference type="GO" id="GO:0005524">
    <property type="term" value="F:ATP binding"/>
    <property type="evidence" value="ECO:0007669"/>
    <property type="project" value="InterPro"/>
</dbReference>
<dbReference type="GO" id="GO:0000400">
    <property type="term" value="F:four-way junction DNA binding"/>
    <property type="evidence" value="ECO:0007669"/>
    <property type="project" value="UniProtKB-UniRule"/>
</dbReference>
<dbReference type="GO" id="GO:0009378">
    <property type="term" value="F:four-way junction helicase activity"/>
    <property type="evidence" value="ECO:0007669"/>
    <property type="project" value="InterPro"/>
</dbReference>
<dbReference type="GO" id="GO:0006310">
    <property type="term" value="P:DNA recombination"/>
    <property type="evidence" value="ECO:0007669"/>
    <property type="project" value="UniProtKB-UniRule"/>
</dbReference>
<dbReference type="GO" id="GO:0006281">
    <property type="term" value="P:DNA repair"/>
    <property type="evidence" value="ECO:0007669"/>
    <property type="project" value="UniProtKB-UniRule"/>
</dbReference>
<dbReference type="CDD" id="cd14332">
    <property type="entry name" value="UBA_RuvA_C"/>
    <property type="match status" value="1"/>
</dbReference>
<dbReference type="Gene3D" id="1.10.150.20">
    <property type="entry name" value="5' to 3' exonuclease, C-terminal subdomain"/>
    <property type="match status" value="1"/>
</dbReference>
<dbReference type="Gene3D" id="1.10.8.10">
    <property type="entry name" value="DNA helicase RuvA subunit, C-terminal domain"/>
    <property type="match status" value="1"/>
</dbReference>
<dbReference type="Gene3D" id="2.40.50.140">
    <property type="entry name" value="Nucleic acid-binding proteins"/>
    <property type="match status" value="1"/>
</dbReference>
<dbReference type="HAMAP" id="MF_00031">
    <property type="entry name" value="DNA_HJ_migration_RuvA"/>
    <property type="match status" value="1"/>
</dbReference>
<dbReference type="InterPro" id="IPR013849">
    <property type="entry name" value="DNA_helicase_Holl-junc_RuvA_I"/>
</dbReference>
<dbReference type="InterPro" id="IPR003583">
    <property type="entry name" value="Hlx-hairpin-Hlx_DNA-bd_motif"/>
</dbReference>
<dbReference type="InterPro" id="IPR012340">
    <property type="entry name" value="NA-bd_OB-fold"/>
</dbReference>
<dbReference type="InterPro" id="IPR000085">
    <property type="entry name" value="RuvA"/>
</dbReference>
<dbReference type="InterPro" id="IPR010994">
    <property type="entry name" value="RuvA_2-like"/>
</dbReference>
<dbReference type="InterPro" id="IPR011114">
    <property type="entry name" value="RuvA_C"/>
</dbReference>
<dbReference type="InterPro" id="IPR036267">
    <property type="entry name" value="RuvA_C_sf"/>
</dbReference>
<dbReference type="NCBIfam" id="TIGR00084">
    <property type="entry name" value="ruvA"/>
    <property type="match status" value="1"/>
</dbReference>
<dbReference type="Pfam" id="PF14520">
    <property type="entry name" value="HHH_5"/>
    <property type="match status" value="1"/>
</dbReference>
<dbReference type="Pfam" id="PF07499">
    <property type="entry name" value="RuvA_C"/>
    <property type="match status" value="1"/>
</dbReference>
<dbReference type="Pfam" id="PF01330">
    <property type="entry name" value="RuvA_N"/>
    <property type="match status" value="1"/>
</dbReference>
<dbReference type="SMART" id="SM00278">
    <property type="entry name" value="HhH1"/>
    <property type="match status" value="2"/>
</dbReference>
<dbReference type="SUPFAM" id="SSF46929">
    <property type="entry name" value="DNA helicase RuvA subunit, C-terminal domain"/>
    <property type="match status" value="1"/>
</dbReference>
<dbReference type="SUPFAM" id="SSF50249">
    <property type="entry name" value="Nucleic acid-binding proteins"/>
    <property type="match status" value="1"/>
</dbReference>
<dbReference type="SUPFAM" id="SSF47781">
    <property type="entry name" value="RuvA domain 2-like"/>
    <property type="match status" value="1"/>
</dbReference>
<reference key="1">
    <citation type="journal article" date="2007" name="J. Bacteriol.">
        <title>The complete genome sequence of Bacillus thuringiensis Al Hakam.</title>
        <authorList>
            <person name="Challacombe J.F."/>
            <person name="Altherr M.R."/>
            <person name="Xie G."/>
            <person name="Bhotika S.S."/>
            <person name="Brown N."/>
            <person name="Bruce D."/>
            <person name="Campbell C.S."/>
            <person name="Campbell M.L."/>
            <person name="Chen J."/>
            <person name="Chertkov O."/>
            <person name="Cleland C."/>
            <person name="Dimitrijevic M."/>
            <person name="Doggett N.A."/>
            <person name="Fawcett J.J."/>
            <person name="Glavina T."/>
            <person name="Goodwin L.A."/>
            <person name="Green L.D."/>
            <person name="Han C.S."/>
            <person name="Hill K.K."/>
            <person name="Hitchcock P."/>
            <person name="Jackson P.J."/>
            <person name="Keim P."/>
            <person name="Kewalramani A.R."/>
            <person name="Longmire J."/>
            <person name="Lucas S."/>
            <person name="Malfatti S."/>
            <person name="Martinez D."/>
            <person name="McMurry K."/>
            <person name="Meincke L.J."/>
            <person name="Misra M."/>
            <person name="Moseman B.L."/>
            <person name="Mundt M."/>
            <person name="Munk A.C."/>
            <person name="Okinaka R.T."/>
            <person name="Parson-Quintana B."/>
            <person name="Reilly L.P."/>
            <person name="Richardson P."/>
            <person name="Robinson D.L."/>
            <person name="Saunders E."/>
            <person name="Tapia R."/>
            <person name="Tesmer J.G."/>
            <person name="Thayer N."/>
            <person name="Thompson L.S."/>
            <person name="Tice H."/>
            <person name="Ticknor L.O."/>
            <person name="Wills P.L."/>
            <person name="Gilna P."/>
            <person name="Brettin T.S."/>
        </authorList>
    </citation>
    <scope>NUCLEOTIDE SEQUENCE [LARGE SCALE GENOMIC DNA]</scope>
    <source>
        <strain>Al Hakam</strain>
    </source>
</reference>
<gene>
    <name evidence="1" type="primary">ruvA</name>
    <name type="ordered locus">BALH_4000</name>
</gene>
<sequence>MFEYVTGYVEYVGPEYVVIDHNGIGYQIFTPNPYVFQRSKQEIRVYTYHYVREDIMALYGFKTREERLLFTKLLGVSGIGPKGALAILASGQTGQVVQAIEHEDEKFLVKFPGVGKKTARQMILDLKGKLADVVPDAFVDLFSDEERFDEKKGSSAELDEALEALRALGYAEREVSRVVPELLKESLTTDQYIKKALSLLLNGKR</sequence>
<keyword id="KW-0963">Cytoplasm</keyword>
<keyword id="KW-0227">DNA damage</keyword>
<keyword id="KW-0233">DNA recombination</keyword>
<keyword id="KW-0234">DNA repair</keyword>
<keyword id="KW-0238">DNA-binding</keyword>
<accession>A0RJ27</accession>
<comment type="function">
    <text evidence="1">The RuvA-RuvB-RuvC complex processes Holliday junction (HJ) DNA during genetic recombination and DNA repair, while the RuvA-RuvB complex plays an important role in the rescue of blocked DNA replication forks via replication fork reversal (RFR). RuvA specifically binds to HJ cruciform DNA, conferring on it an open structure. The RuvB hexamer acts as an ATP-dependent pump, pulling dsDNA into and through the RuvAB complex. HJ branch migration allows RuvC to scan DNA until it finds its consensus sequence, where it cleaves and resolves the cruciform DNA.</text>
</comment>
<comment type="subunit">
    <text evidence="1">Homotetramer. Forms an RuvA(8)-RuvB(12)-Holliday junction (HJ) complex. HJ DNA is sandwiched between 2 RuvA tetramers; dsDNA enters through RuvA and exits via RuvB. An RuvB hexamer assembles on each DNA strand where it exits the tetramer. Each RuvB hexamer is contacted by two RuvA subunits (via domain III) on 2 adjacent RuvB subunits; this complex drives branch migration. In the full resolvosome a probable DNA-RuvA(4)-RuvB(12)-RuvC(2) complex forms which resolves the HJ.</text>
</comment>
<comment type="subcellular location">
    <subcellularLocation>
        <location evidence="1">Cytoplasm</location>
    </subcellularLocation>
</comment>
<comment type="domain">
    <text evidence="1">Has three domains with a flexible linker between the domains II and III and assumes an 'L' shape. Domain III is highly mobile and contacts RuvB.</text>
</comment>
<comment type="similarity">
    <text evidence="1">Belongs to the RuvA family.</text>
</comment>
<feature type="chain" id="PRO_1000002397" description="Holliday junction branch migration complex subunit RuvA">
    <location>
        <begin position="1"/>
        <end position="205"/>
    </location>
</feature>
<feature type="region of interest" description="Domain I" evidence="1">
    <location>
        <begin position="1"/>
        <end position="62"/>
    </location>
</feature>
<feature type="region of interest" description="Domain II" evidence="1">
    <location>
        <begin position="63"/>
        <end position="141"/>
    </location>
</feature>
<feature type="region of interest" description="Flexible linker" evidence="1">
    <location>
        <begin position="142"/>
        <end position="152"/>
    </location>
</feature>
<feature type="region of interest" description="Domain III" evidence="1">
    <location>
        <begin position="153"/>
        <end position="205"/>
    </location>
</feature>
<protein>
    <recommendedName>
        <fullName evidence="1">Holliday junction branch migration complex subunit RuvA</fullName>
    </recommendedName>
</protein>
<proteinExistence type="inferred from homology"/>
<name>RUVA_BACAH</name>